<name>Y1673_HELMI</name>
<gene>
    <name type="ordered locus">Helmi_16730</name>
    <name type="ORF">HM1_1728</name>
</gene>
<organism>
    <name type="scientific">Heliobacterium modesticaldum (strain ATCC 51547 / Ice1)</name>
    <dbReference type="NCBI Taxonomy" id="498761"/>
    <lineage>
        <taxon>Bacteria</taxon>
        <taxon>Bacillati</taxon>
        <taxon>Bacillota</taxon>
        <taxon>Clostridia</taxon>
        <taxon>Eubacteriales</taxon>
        <taxon>Heliobacteriaceae</taxon>
        <taxon>Heliomicrobium</taxon>
    </lineage>
</organism>
<accession>B0TEP6</accession>
<evidence type="ECO:0000255" key="1">
    <source>
        <dbReference type="HAMAP-Rule" id="MF_00457"/>
    </source>
</evidence>
<protein>
    <recommendedName>
        <fullName evidence="1">UPF0173 metal-dependent hydrolase Helmi_16730</fullName>
    </recommendedName>
</protein>
<feature type="chain" id="PRO_0000367184" description="UPF0173 metal-dependent hydrolase Helmi_16730">
    <location>
        <begin position="1"/>
        <end position="238"/>
    </location>
</feature>
<comment type="similarity">
    <text evidence="1">Belongs to the UPF0173 family.</text>
</comment>
<proteinExistence type="inferred from homology"/>
<keyword id="KW-0378">Hydrolase</keyword>
<keyword id="KW-1185">Reference proteome</keyword>
<reference key="1">
    <citation type="journal article" date="2008" name="J. Bacteriol.">
        <title>The genome of Heliobacterium modesticaldum, a phototrophic representative of the Firmicutes containing the simplest photosynthetic apparatus.</title>
        <authorList>
            <person name="Sattley W.M."/>
            <person name="Madigan M.T."/>
            <person name="Swingley W.D."/>
            <person name="Cheung P.C."/>
            <person name="Clocksin K.M."/>
            <person name="Conrad A.L."/>
            <person name="Dejesa L.C."/>
            <person name="Honchak B.M."/>
            <person name="Jung D.O."/>
            <person name="Karbach L.E."/>
            <person name="Kurdoglu A."/>
            <person name="Lahiri S."/>
            <person name="Mastrian S.D."/>
            <person name="Page L.E."/>
            <person name="Taylor H.L."/>
            <person name="Wang Z.T."/>
            <person name="Raymond J."/>
            <person name="Chen M."/>
            <person name="Blankenship R.E."/>
            <person name="Touchman J.W."/>
        </authorList>
    </citation>
    <scope>NUCLEOTIDE SEQUENCE [LARGE SCALE GENOMIC DNA]</scope>
    <source>
        <strain>ATCC 51547 / Ice1</strain>
    </source>
</reference>
<dbReference type="EMBL" id="CP000930">
    <property type="protein sequence ID" value="ABZ84298.1"/>
    <property type="molecule type" value="Genomic_DNA"/>
</dbReference>
<dbReference type="RefSeq" id="WP_012282803.1">
    <property type="nucleotide sequence ID" value="NC_010337.2"/>
</dbReference>
<dbReference type="SMR" id="B0TEP6"/>
<dbReference type="KEGG" id="hmo:HM1_1728"/>
<dbReference type="eggNOG" id="COG2220">
    <property type="taxonomic scope" value="Bacteria"/>
</dbReference>
<dbReference type="HOGENOM" id="CLU_070010_4_1_9"/>
<dbReference type="OrthoDB" id="9789133at2"/>
<dbReference type="Proteomes" id="UP000008550">
    <property type="component" value="Chromosome"/>
</dbReference>
<dbReference type="GO" id="GO:0016787">
    <property type="term" value="F:hydrolase activity"/>
    <property type="evidence" value="ECO:0007669"/>
    <property type="project" value="UniProtKB-UniRule"/>
</dbReference>
<dbReference type="Gene3D" id="3.60.15.10">
    <property type="entry name" value="Ribonuclease Z/Hydroxyacylglutathione hydrolase-like"/>
    <property type="match status" value="1"/>
</dbReference>
<dbReference type="HAMAP" id="MF_00457">
    <property type="entry name" value="UPF0173"/>
    <property type="match status" value="1"/>
</dbReference>
<dbReference type="InterPro" id="IPR001279">
    <property type="entry name" value="Metallo-B-lactamas"/>
</dbReference>
<dbReference type="InterPro" id="IPR036866">
    <property type="entry name" value="RibonucZ/Hydroxyglut_hydro"/>
</dbReference>
<dbReference type="InterPro" id="IPR022877">
    <property type="entry name" value="UPF0173"/>
</dbReference>
<dbReference type="InterPro" id="IPR050114">
    <property type="entry name" value="UPF0173_UPF0282_UlaG_hydrolase"/>
</dbReference>
<dbReference type="NCBIfam" id="NF001911">
    <property type="entry name" value="PRK00685.1"/>
    <property type="match status" value="1"/>
</dbReference>
<dbReference type="PANTHER" id="PTHR43546:SF3">
    <property type="entry name" value="UPF0173 METAL-DEPENDENT HYDROLASE MJ1163"/>
    <property type="match status" value="1"/>
</dbReference>
<dbReference type="PANTHER" id="PTHR43546">
    <property type="entry name" value="UPF0173 METAL-DEPENDENT HYDROLASE MJ1163-RELATED"/>
    <property type="match status" value="1"/>
</dbReference>
<dbReference type="Pfam" id="PF12706">
    <property type="entry name" value="Lactamase_B_2"/>
    <property type="match status" value="1"/>
</dbReference>
<dbReference type="SMART" id="SM00849">
    <property type="entry name" value="Lactamase_B"/>
    <property type="match status" value="1"/>
</dbReference>
<dbReference type="SUPFAM" id="SSF56281">
    <property type="entry name" value="Metallo-hydrolase/oxidoreductase"/>
    <property type="match status" value="1"/>
</dbReference>
<sequence>MLHVTFFGHANFLLDDGQTKVLIDPFFTGNPVCPIKADAVSADYILVSHGHGDHLGDAIDIAKGTGATIISSFELASYCQRKGVKAHGMAIGGKRDFPFGRVRLTAAVHGSGIIEGDNYLDVGNPCGFLVNMGGKSVYHAGDTGLTRDMELINMCFLKGGRLDLALLPIGDNFGMGPEDALYATKMLHPRMIVPMHYNTFPVIEQDVAAFKRVVTELTDSECHVLAPGDTLTLNGHGR</sequence>